<evidence type="ECO:0000255" key="1">
    <source>
        <dbReference type="HAMAP-Rule" id="MF_01320"/>
    </source>
</evidence>
<evidence type="ECO:0000256" key="2">
    <source>
        <dbReference type="SAM" id="MobiDB-lite"/>
    </source>
</evidence>
<evidence type="ECO:0000305" key="3"/>
<proteinExistence type="inferred from homology"/>
<name>RL2_AFIC5</name>
<reference key="1">
    <citation type="journal article" date="2008" name="J. Bacteriol.">
        <title>Genome sequence of the chemolithoautotrophic bacterium Oligotropha carboxidovorans OM5T.</title>
        <authorList>
            <person name="Paul D."/>
            <person name="Bridges S."/>
            <person name="Burgess S.C."/>
            <person name="Dandass Y."/>
            <person name="Lawrence M.L."/>
        </authorList>
    </citation>
    <scope>NUCLEOTIDE SEQUENCE [LARGE SCALE GENOMIC DNA]</scope>
    <source>
        <strain>ATCC 49405 / DSM 1227 / KCTC 32145 / OM5</strain>
    </source>
</reference>
<reference key="2">
    <citation type="journal article" date="2011" name="J. Bacteriol.">
        <title>Complete genome sequences of the chemolithoautotrophic Oligotropha carboxidovorans strains OM4 and OM5.</title>
        <authorList>
            <person name="Volland S."/>
            <person name="Rachinger M."/>
            <person name="Strittmatter A."/>
            <person name="Daniel R."/>
            <person name="Gottschalk G."/>
            <person name="Meyer O."/>
        </authorList>
    </citation>
    <scope>NUCLEOTIDE SEQUENCE [LARGE SCALE GENOMIC DNA]</scope>
    <source>
        <strain>ATCC 49405 / DSM 1227 / KCTC 32145 / OM5</strain>
    </source>
</reference>
<feature type="chain" id="PRO_1000141589" description="Large ribosomal subunit protein uL2">
    <location>
        <begin position="1"/>
        <end position="278"/>
    </location>
</feature>
<feature type="region of interest" description="Disordered" evidence="2">
    <location>
        <begin position="222"/>
        <end position="278"/>
    </location>
</feature>
<keyword id="KW-1185">Reference proteome</keyword>
<keyword id="KW-0687">Ribonucleoprotein</keyword>
<keyword id="KW-0689">Ribosomal protein</keyword>
<keyword id="KW-0694">RNA-binding</keyword>
<keyword id="KW-0699">rRNA-binding</keyword>
<gene>
    <name evidence="1" type="primary">rplB</name>
    <name type="ordered locus">OCAR_5680</name>
    <name type="ordered locus">OCA5_c23270</name>
</gene>
<sequence length="278" mass="30604">MALKTFNPTTPGQRQLVMVDRSALYKGKPLKKLTEGKHSNGGRGNTGRITVRFRGGGHKQTYRLIDFKRTKVDVPATVERLEYDPNRTAFIALIKYADGELSYILAPQRLAVGDTVVAGSYVDVKPGNAMPMGNMPVGTIVHNVEMKIGKGGQMARSAGTYAQIVGRDHDYVILRLNSGEQRMVHGRCMATIGAVSNHDHMNTSIGKAGRTRWLGRRPHNRGVVMNPIDHPHGGGEGRTSGGRHPVTPWGKPTKGKKTRSNKSTNKFILISRHKRKKK</sequence>
<protein>
    <recommendedName>
        <fullName evidence="1">Large ribosomal subunit protein uL2</fullName>
    </recommendedName>
    <alternativeName>
        <fullName evidence="3">50S ribosomal protein L2</fullName>
    </alternativeName>
</protein>
<comment type="function">
    <text evidence="1">One of the primary rRNA binding proteins. Required for association of the 30S and 50S subunits to form the 70S ribosome, for tRNA binding and peptide bond formation. It has been suggested to have peptidyltransferase activity; this is somewhat controversial. Makes several contacts with the 16S rRNA in the 70S ribosome.</text>
</comment>
<comment type="subunit">
    <text evidence="1">Part of the 50S ribosomal subunit. Forms a bridge to the 30S subunit in the 70S ribosome.</text>
</comment>
<comment type="similarity">
    <text evidence="1">Belongs to the universal ribosomal protein uL2 family.</text>
</comment>
<accession>B6JET6</accession>
<accession>F8BZC4</accession>
<organism>
    <name type="scientific">Afipia carboxidovorans (strain ATCC 49405 / DSM 1227 / KCTC 32145 / OM5)</name>
    <name type="common">Oligotropha carboxidovorans</name>
    <dbReference type="NCBI Taxonomy" id="504832"/>
    <lineage>
        <taxon>Bacteria</taxon>
        <taxon>Pseudomonadati</taxon>
        <taxon>Pseudomonadota</taxon>
        <taxon>Alphaproteobacteria</taxon>
        <taxon>Hyphomicrobiales</taxon>
        <taxon>Nitrobacteraceae</taxon>
        <taxon>Afipia</taxon>
    </lineage>
</organism>
<dbReference type="EMBL" id="CP001196">
    <property type="protein sequence ID" value="ACI92808.1"/>
    <property type="molecule type" value="Genomic_DNA"/>
</dbReference>
<dbReference type="EMBL" id="CP002826">
    <property type="protein sequence ID" value="AEI07027.1"/>
    <property type="molecule type" value="Genomic_DNA"/>
</dbReference>
<dbReference type="RefSeq" id="WP_012562837.1">
    <property type="nucleotide sequence ID" value="NC_015684.1"/>
</dbReference>
<dbReference type="SMR" id="B6JET6"/>
<dbReference type="STRING" id="504832.OCA5_c23270"/>
<dbReference type="KEGG" id="oca:OCAR_5680"/>
<dbReference type="KEGG" id="ocg:OCA5_c23270"/>
<dbReference type="PATRIC" id="fig|504832.7.peg.2452"/>
<dbReference type="eggNOG" id="COG0090">
    <property type="taxonomic scope" value="Bacteria"/>
</dbReference>
<dbReference type="HOGENOM" id="CLU_036235_2_1_5"/>
<dbReference type="OrthoDB" id="9778722at2"/>
<dbReference type="Proteomes" id="UP000007730">
    <property type="component" value="Chromosome"/>
</dbReference>
<dbReference type="GO" id="GO:0015934">
    <property type="term" value="C:large ribosomal subunit"/>
    <property type="evidence" value="ECO:0007669"/>
    <property type="project" value="InterPro"/>
</dbReference>
<dbReference type="GO" id="GO:0019843">
    <property type="term" value="F:rRNA binding"/>
    <property type="evidence" value="ECO:0007669"/>
    <property type="project" value="UniProtKB-UniRule"/>
</dbReference>
<dbReference type="GO" id="GO:0003735">
    <property type="term" value="F:structural constituent of ribosome"/>
    <property type="evidence" value="ECO:0007669"/>
    <property type="project" value="InterPro"/>
</dbReference>
<dbReference type="GO" id="GO:0016740">
    <property type="term" value="F:transferase activity"/>
    <property type="evidence" value="ECO:0007669"/>
    <property type="project" value="InterPro"/>
</dbReference>
<dbReference type="GO" id="GO:0002181">
    <property type="term" value="P:cytoplasmic translation"/>
    <property type="evidence" value="ECO:0007669"/>
    <property type="project" value="TreeGrafter"/>
</dbReference>
<dbReference type="FunFam" id="2.30.30.30:FF:000055">
    <property type="entry name" value="50S ribosomal protein L2"/>
    <property type="match status" value="1"/>
</dbReference>
<dbReference type="FunFam" id="2.40.50.140:FF:000003">
    <property type="entry name" value="50S ribosomal protein L2"/>
    <property type="match status" value="1"/>
</dbReference>
<dbReference type="FunFam" id="4.10.950.10:FF:000001">
    <property type="entry name" value="50S ribosomal protein L2"/>
    <property type="match status" value="1"/>
</dbReference>
<dbReference type="Gene3D" id="2.30.30.30">
    <property type="match status" value="1"/>
</dbReference>
<dbReference type="Gene3D" id="2.40.50.140">
    <property type="entry name" value="Nucleic acid-binding proteins"/>
    <property type="match status" value="1"/>
</dbReference>
<dbReference type="Gene3D" id="4.10.950.10">
    <property type="entry name" value="Ribosomal protein L2, domain 3"/>
    <property type="match status" value="1"/>
</dbReference>
<dbReference type="HAMAP" id="MF_01320_B">
    <property type="entry name" value="Ribosomal_uL2_B"/>
    <property type="match status" value="1"/>
</dbReference>
<dbReference type="InterPro" id="IPR012340">
    <property type="entry name" value="NA-bd_OB-fold"/>
</dbReference>
<dbReference type="InterPro" id="IPR014722">
    <property type="entry name" value="Rib_uL2_dom2"/>
</dbReference>
<dbReference type="InterPro" id="IPR002171">
    <property type="entry name" value="Ribosomal_uL2"/>
</dbReference>
<dbReference type="InterPro" id="IPR005880">
    <property type="entry name" value="Ribosomal_uL2_bac/org-type"/>
</dbReference>
<dbReference type="InterPro" id="IPR022669">
    <property type="entry name" value="Ribosomal_uL2_C"/>
</dbReference>
<dbReference type="InterPro" id="IPR022671">
    <property type="entry name" value="Ribosomal_uL2_CS"/>
</dbReference>
<dbReference type="InterPro" id="IPR014726">
    <property type="entry name" value="Ribosomal_uL2_dom3"/>
</dbReference>
<dbReference type="InterPro" id="IPR022666">
    <property type="entry name" value="Ribosomal_uL2_RNA-bd_dom"/>
</dbReference>
<dbReference type="InterPro" id="IPR008991">
    <property type="entry name" value="Translation_prot_SH3-like_sf"/>
</dbReference>
<dbReference type="NCBIfam" id="TIGR01171">
    <property type="entry name" value="rplB_bact"/>
    <property type="match status" value="1"/>
</dbReference>
<dbReference type="PANTHER" id="PTHR13691:SF5">
    <property type="entry name" value="LARGE RIBOSOMAL SUBUNIT PROTEIN UL2M"/>
    <property type="match status" value="1"/>
</dbReference>
<dbReference type="PANTHER" id="PTHR13691">
    <property type="entry name" value="RIBOSOMAL PROTEIN L2"/>
    <property type="match status" value="1"/>
</dbReference>
<dbReference type="Pfam" id="PF00181">
    <property type="entry name" value="Ribosomal_L2"/>
    <property type="match status" value="1"/>
</dbReference>
<dbReference type="Pfam" id="PF03947">
    <property type="entry name" value="Ribosomal_L2_C"/>
    <property type="match status" value="1"/>
</dbReference>
<dbReference type="PIRSF" id="PIRSF002158">
    <property type="entry name" value="Ribosomal_L2"/>
    <property type="match status" value="1"/>
</dbReference>
<dbReference type="SMART" id="SM01383">
    <property type="entry name" value="Ribosomal_L2"/>
    <property type="match status" value="1"/>
</dbReference>
<dbReference type="SMART" id="SM01382">
    <property type="entry name" value="Ribosomal_L2_C"/>
    <property type="match status" value="1"/>
</dbReference>
<dbReference type="SUPFAM" id="SSF50249">
    <property type="entry name" value="Nucleic acid-binding proteins"/>
    <property type="match status" value="1"/>
</dbReference>
<dbReference type="SUPFAM" id="SSF50104">
    <property type="entry name" value="Translation proteins SH3-like domain"/>
    <property type="match status" value="1"/>
</dbReference>
<dbReference type="PROSITE" id="PS00467">
    <property type="entry name" value="RIBOSOMAL_L2"/>
    <property type="match status" value="1"/>
</dbReference>